<keyword id="KW-0325">Glycoprotein</keyword>
<keyword id="KW-0349">Heme</keyword>
<keyword id="KW-0408">Iron</keyword>
<keyword id="KW-0472">Membrane</keyword>
<keyword id="KW-0479">Metal-binding</keyword>
<keyword id="KW-0503">Monooxygenase</keyword>
<keyword id="KW-0560">Oxidoreductase</keyword>
<keyword id="KW-1185">Reference proteome</keyword>
<keyword id="KW-0812">Transmembrane</keyword>
<keyword id="KW-1133">Transmembrane helix</keyword>
<sequence>MIPINISPATVVLCGSIVTVSIAYVIFVVGHRRKGFPPGPPTLPVIGNIHQLPTTGAHFKFTEWAQKYGGIYSLKLGTGTALVITDREIVKKLMDKKSSITSDRPPSYVSYDLITKGDHLLVMHYNETWRKIRKYMHQFFRESECEKKHITLQDAEATQMMLEFLETPDNHNLHTKRFSNSIISTLLFGLRTPTYDSPHAKHLYDIMERWSAVMEPGNTPPVDIYPIFKYIPESLFGNWISRASGVGRDMERLYANMISQFKIRAEDPKISRTHESFFDILLREQEKTREFTDHEIAFIGGVQLEGGSDTSASILTAFVQAMVNWPEVQRVAQEEIDRVIGEDRSPTWNDFAALPYINAIMKETHRWRPVTPLSFPHCLTKDEYLDGFLLPKGATIILNVWGIQNDESVYPRPEEFDPSRFKDHKLLAPEYAVSDWKLRDHYSFGVGRRICPGIHLAERNVWLGVAKLLWAFKFEKATGADGQPIEMNVDPKTGYTEGFLHCALPFKCKVTVRSEERRKTILKEFELAKQVFNEYTG</sequence>
<gene>
    <name type="ORF">AOL_s00215g282</name>
</gene>
<organism>
    <name type="scientific">Arthrobotrys oligospora (strain ATCC 24927 / CBS 115.81 / DSM 1491)</name>
    <name type="common">Nematode-trapping fungus</name>
    <name type="synonym">Didymozoophaga oligospora</name>
    <dbReference type="NCBI Taxonomy" id="756982"/>
    <lineage>
        <taxon>Eukaryota</taxon>
        <taxon>Fungi</taxon>
        <taxon>Dikarya</taxon>
        <taxon>Ascomycota</taxon>
        <taxon>Pezizomycotina</taxon>
        <taxon>Orbiliomycetes</taxon>
        <taxon>Orbiliales</taxon>
        <taxon>Orbiliaceae</taxon>
        <taxon>Orbilia</taxon>
        <taxon>Orbilia oligospora</taxon>
    </lineage>
</organism>
<proteinExistence type="evidence at transcript level"/>
<reference key="1">
    <citation type="journal article" date="2011" name="PLoS Pathog.">
        <title>Genomic and proteomic analyses of the fungus Arthrobotrys oligospora provide insights into nematode-trap formation.</title>
        <authorList>
            <person name="Yang J."/>
            <person name="Wang L."/>
            <person name="Ji X."/>
            <person name="Feng Y."/>
            <person name="Li X."/>
            <person name="Zou C."/>
            <person name="Xu J."/>
            <person name="Ren Y."/>
            <person name="Mi Q."/>
            <person name="Wu J."/>
            <person name="Liu S."/>
            <person name="Liu Y."/>
            <person name="Huang X."/>
            <person name="Wang H."/>
            <person name="Niu X."/>
            <person name="Li J."/>
            <person name="Liang L."/>
            <person name="Luo Y."/>
            <person name="Ji K."/>
            <person name="Zhou W."/>
            <person name="Yu Z."/>
            <person name="Li G."/>
            <person name="Liu Y."/>
            <person name="Li L."/>
            <person name="Qiao M."/>
            <person name="Feng L."/>
            <person name="Zhang K.-Q."/>
        </authorList>
    </citation>
    <scope>NUCLEOTIDE SEQUENCE [LARGE SCALE GENOMIC DNA]</scope>
    <source>
        <strain>ATCC 24927 / CBS 115.81 / DSM 1491</strain>
    </source>
</reference>
<reference key="2">
    <citation type="journal article" date="2016" name="J. Agric. Food Chem.">
        <title>Nematicidal key precursors for the biosynthesis of morphological regulatory arthrosporols in nematode-trapping fungus Arthrobotrys oligospora.</title>
        <authorList>
            <person name="Xu Z."/>
            <person name="Chen Y."/>
            <person name="Song T."/>
            <person name="Zeng Z."/>
            <person name="Yan N."/>
            <person name="Zhang K."/>
            <person name="Niu X."/>
        </authorList>
    </citation>
    <scope>FUNCTION</scope>
    <scope>DISRUPTION PHENOTYPE</scope>
    <scope>PATHWAY</scope>
</reference>
<reference key="3">
    <citation type="journal article" date="2021" name="J. Agric. Food Chem.">
        <title>Polyketide synthase-terpenoid synthase hybrid pathway regulation of trap formation through ammonia metabolism controls soil colonization of predominant nematode-trapping fungus.</title>
        <authorList>
            <person name="He Z.Q."/>
            <person name="Wang L.J."/>
            <person name="Wang Y.J."/>
            <person name="Chen Y.H."/>
            <person name="Wen Y."/>
            <person name="Zhang K.Q."/>
            <person name="Niu X.M."/>
        </authorList>
    </citation>
    <scope>FUNCTION</scope>
    <scope>DISRUPTION PHENOTYPE</scope>
    <scope>PATHWAY</scope>
</reference>
<reference key="4">
    <citation type="journal article" date="2022" name="J. Fungi">
        <title>The multifaceted gene 275 embedded in the PKS-PTS gene cluster was involved in the regulation of arthrobotrisin biosynthesis, TCA cycle, and septa formation in nematode-trapping fungus Arthrobotrys oligospora.</title>
        <authorList>
            <person name="Zhou J."/>
            <person name="Wu Q.F."/>
            <person name="Li S.H."/>
            <person name="Yan J.X."/>
            <person name="Wu L."/>
            <person name="Cheng Q.Y."/>
            <person name="He Z.Q."/>
            <person name="Yue X.T."/>
            <person name="Zhang K.Q."/>
            <person name="Zhang L.L."/>
            <person name="Niu X.M."/>
        </authorList>
    </citation>
    <scope>INDUCTION</scope>
</reference>
<reference key="5">
    <citation type="journal article" date="2025" name="J. Adv. Res.">
        <title>Identification of a transcription factor AoMsn2 of the Hog1 signaling pathway contributes to fungal growth, development and pathogenicity in Arthrobotrys oligospora.</title>
        <authorList>
            <person name="Liu Q."/>
            <person name="Jiang K."/>
            <person name="Duan S."/>
            <person name="Zhao N."/>
            <person name="Shen Y."/>
            <person name="Zhu L."/>
            <person name="Zhang K.Q."/>
            <person name="Yang J."/>
        </authorList>
    </citation>
    <scope>INDUCTION</scope>
</reference>
<accession>G1XU03</accession>
<feature type="chain" id="PRO_0000445286" description="Cytochrome P450 monooxygenase AOL_s00215g282">
    <location>
        <begin position="1"/>
        <end position="537"/>
    </location>
</feature>
<feature type="transmembrane region" description="Helical" evidence="2">
    <location>
        <begin position="9"/>
        <end position="29"/>
    </location>
</feature>
<feature type="binding site" description="axial binding residue" evidence="1">
    <location>
        <position position="451"/>
    </location>
    <ligand>
        <name>heme</name>
        <dbReference type="ChEBI" id="CHEBI:30413"/>
    </ligand>
    <ligandPart>
        <name>Fe</name>
        <dbReference type="ChEBI" id="CHEBI:18248"/>
    </ligandPart>
</feature>
<feature type="glycosylation site" description="N-linked (GlcNAc...) asparagine" evidence="3">
    <location>
        <position position="126"/>
    </location>
</feature>
<protein>
    <recommendedName>
        <fullName evidence="8">Cytochrome P450 monooxygenase AOL_s00215g282</fullName>
        <ecNumber evidence="11">1.-.-.-</ecNumber>
    </recommendedName>
    <alternativeName>
        <fullName evidence="9">Sesquiterpenyl epoxy-cyclohexenoids cluster protein AOL_s00215g282</fullName>
        <shortName evidence="9">SECs cluster protein AOL_s00215g282</shortName>
    </alternativeName>
    <alternativeName>
        <fullName evidence="8">m-cresol hydroxylase AOL_s00215g282</fullName>
    </alternativeName>
</protein>
<dbReference type="EC" id="1.-.-.-" evidence="11"/>
<dbReference type="EMBL" id="ADOT01000316">
    <property type="protein sequence ID" value="EGX43546.1"/>
    <property type="molecule type" value="Genomic_DNA"/>
</dbReference>
<dbReference type="RefSeq" id="XP_011127786.1">
    <property type="nucleotide sequence ID" value="XM_011129484.1"/>
</dbReference>
<dbReference type="SMR" id="G1XU03"/>
<dbReference type="STRING" id="756982.G1XU03"/>
<dbReference type="GeneID" id="22898693"/>
<dbReference type="eggNOG" id="KOG0156">
    <property type="taxonomic scope" value="Eukaryota"/>
</dbReference>
<dbReference type="HOGENOM" id="CLU_001570_2_1_1"/>
<dbReference type="InParanoid" id="G1XU03"/>
<dbReference type="OMA" id="ESHRWRP"/>
<dbReference type="OrthoDB" id="50307at4890"/>
<dbReference type="UniPathway" id="UPA00213"/>
<dbReference type="Proteomes" id="UP000008784">
    <property type="component" value="Unassembled WGS sequence"/>
</dbReference>
<dbReference type="GO" id="GO:0016020">
    <property type="term" value="C:membrane"/>
    <property type="evidence" value="ECO:0007669"/>
    <property type="project" value="UniProtKB-SubCell"/>
</dbReference>
<dbReference type="GO" id="GO:0020037">
    <property type="term" value="F:heme binding"/>
    <property type="evidence" value="ECO:0007669"/>
    <property type="project" value="InterPro"/>
</dbReference>
<dbReference type="GO" id="GO:0005506">
    <property type="term" value="F:iron ion binding"/>
    <property type="evidence" value="ECO:0007669"/>
    <property type="project" value="InterPro"/>
</dbReference>
<dbReference type="GO" id="GO:0004497">
    <property type="term" value="F:monooxygenase activity"/>
    <property type="evidence" value="ECO:0007669"/>
    <property type="project" value="UniProtKB-KW"/>
</dbReference>
<dbReference type="GO" id="GO:0016705">
    <property type="term" value="F:oxidoreductase activity, acting on paired donors, with incorporation or reduction of molecular oxygen"/>
    <property type="evidence" value="ECO:0007669"/>
    <property type="project" value="InterPro"/>
</dbReference>
<dbReference type="GO" id="GO:0016114">
    <property type="term" value="P:terpenoid biosynthetic process"/>
    <property type="evidence" value="ECO:0007669"/>
    <property type="project" value="UniProtKB-UniPathway"/>
</dbReference>
<dbReference type="CDD" id="cd11065">
    <property type="entry name" value="CYP64-like"/>
    <property type="match status" value="1"/>
</dbReference>
<dbReference type="Gene3D" id="1.10.630.10">
    <property type="entry name" value="Cytochrome P450"/>
    <property type="match status" value="1"/>
</dbReference>
<dbReference type="InterPro" id="IPR001128">
    <property type="entry name" value="Cyt_P450"/>
</dbReference>
<dbReference type="InterPro" id="IPR017972">
    <property type="entry name" value="Cyt_P450_CS"/>
</dbReference>
<dbReference type="InterPro" id="IPR002401">
    <property type="entry name" value="Cyt_P450_E_grp-I"/>
</dbReference>
<dbReference type="InterPro" id="IPR036396">
    <property type="entry name" value="Cyt_P450_sf"/>
</dbReference>
<dbReference type="InterPro" id="IPR050364">
    <property type="entry name" value="Cytochrome_P450_fung"/>
</dbReference>
<dbReference type="PANTHER" id="PTHR46300:SF2">
    <property type="entry name" value="CYTOCHROME P450 MONOOXYGENASE ALNH-RELATED"/>
    <property type="match status" value="1"/>
</dbReference>
<dbReference type="PANTHER" id="PTHR46300">
    <property type="entry name" value="P450, PUTATIVE (EUROFUNG)-RELATED-RELATED"/>
    <property type="match status" value="1"/>
</dbReference>
<dbReference type="Pfam" id="PF00067">
    <property type="entry name" value="p450"/>
    <property type="match status" value="1"/>
</dbReference>
<dbReference type="PRINTS" id="PR00463">
    <property type="entry name" value="EP450I"/>
</dbReference>
<dbReference type="SUPFAM" id="SSF48264">
    <property type="entry name" value="Cytochrome P450"/>
    <property type="match status" value="1"/>
</dbReference>
<dbReference type="PROSITE" id="PS00086">
    <property type="entry name" value="CYTOCHROME_P450"/>
    <property type="match status" value="1"/>
</dbReference>
<evidence type="ECO:0000250" key="1">
    <source>
        <dbReference type="UniProtKB" id="P04798"/>
    </source>
</evidence>
<evidence type="ECO:0000255" key="2"/>
<evidence type="ECO:0000255" key="3">
    <source>
        <dbReference type="PROSITE-ProRule" id="PRU00498"/>
    </source>
</evidence>
<evidence type="ECO:0000269" key="4">
    <source>
    </source>
</evidence>
<evidence type="ECO:0000269" key="5">
    <source>
    </source>
</evidence>
<evidence type="ECO:0000269" key="6">
    <source>
    </source>
</evidence>
<evidence type="ECO:0000269" key="7">
    <source>
    </source>
</evidence>
<evidence type="ECO:0000303" key="8">
    <source>
    </source>
</evidence>
<evidence type="ECO:0000303" key="9">
    <source>
    </source>
</evidence>
<evidence type="ECO:0000305" key="10"/>
<evidence type="ECO:0000305" key="11">
    <source>
    </source>
</evidence>
<evidence type="ECO:0000305" key="12">
    <source>
    </source>
</evidence>
<name>AR282_ARTOA</name>
<comment type="function">
    <text evidence="4 5 12">Cytochrome P450 monooxygenase; part of the gene cluster that mediates the biosynthesis of sesquiterpenyl epoxy-cyclohexenoids (SECs) such as anthrobotrisins and arthrosporols, metabolites that possess a novel hybrid carbon skeleton consisting of a polyketide-derived epoxycyclohexenol combined with a terpenoid-derived monocyclic sesquiterpenol substructure (PKS-PTS hybrid) (PubMed:27723963, PubMed:33823587). The SEC pathway plays an important role for fungal soil colonization via decreasing fungal nematode-capturing ability (PubMed:33823587). Within the pathway, the cytochrome P450 monooxygenase AOL_s00215g282 acts as a m-cresol hydrolase that converts m-cresol to toluquinol (PubMed:27723963, PubMed:33823587). The pathway begins with the biosynthesis of 6-methylsalicylic acid (6-MSA), the first precursor of the polyketide-derived epoxycyclohexenol in arthrosporols, by the polyketide synthase (PKS) AOL_s00215g283 via condensation of 1 acetate and 3 malonate units. The 6-methylsalicylic acid decarboxylase AOL_s00215g281 then catalyzes the decarboxylation of 6-methylsalicylic acid to yield m-cresol. The cytochrome P450 monooxygenase AOL_s00215g282 further oxidizes m-cresol to yield toluquinol. With the assistance of the oxidoreductase AOL_s00215g277, the polyprenyl transferase AOL_s00215g276 catalyzes the farnesylation of toluquinol to produce farnesyl hydroquinone, the hybrid precursor for biosynthesis of SECs. Farnesyl hydroquinone undergoes epoxidation and then subsequent dehydrogenation to form farnesyl epoxy-quinone, the first and simplest SEC. The cytochrome P450 monooxygenase AOL_s00215g278 and the FAD-dependent monooxygenase AOL_s00215g279 might be involved in the oxygenation of the phenol moiety, most likely in the epoxy formation. The cytochrome P450 monooxygenases AOL_s00215g274 and AOL_s00215g280 are involved in specific regional ketone reductions at respectively C-4 and C-1 of farnesyl epoxy-quinone PubMed:33823587 (Probable).</text>
</comment>
<comment type="cofactor">
    <cofactor evidence="1">
        <name>heme</name>
        <dbReference type="ChEBI" id="CHEBI:30413"/>
    </cofactor>
</comment>
<comment type="pathway">
    <text evidence="4 5">Secondary metabolite biosynthesis; terpenoid biosynthesis.</text>
</comment>
<comment type="subcellular location">
    <subcellularLocation>
        <location evidence="2">Membrane</location>
        <topology evidence="2">Single-pass membrane protein</topology>
    </subcellularLocation>
</comment>
<comment type="induction">
    <text evidence="6 7">Expression is down-regulated by the cluster-specific transcription factor AOL_s00215g275 (PubMed:36547594). Expression is also down-regulated by the HOG1-MAPK pathway downstream transcription factor MSN2 (PubMed:38331317).</text>
</comment>
<comment type="disruption phenotype">
    <text evidence="4 5">Abolishes the production of arthrobotrisins A to D and arthrosporol A, and accumulates m-cresol (PubMed:27723963, PubMed:33823587). Lead to altered growth rates and causes significant decreases in the spore formation and germination (PubMed:27723963, PubMed:33823587). Shows significantly increased ammonia levels in fungal mycelia (PubMed:33823587).</text>
</comment>
<comment type="similarity">
    <text evidence="10">Belongs to the cytochrome P450 family.</text>
</comment>